<feature type="chain" id="PRO_0000141529" description="Small ribosomal subunit protein eS17">
    <location>
        <begin position="1"/>
        <end position="135"/>
    </location>
</feature>
<comment type="function">
    <text evidence="1">Component of the small ribosomal subunit. The ribosome is a large ribonucleoprotein complex responsible for the synthesis of proteins in the cell. Part of the small subunit (SSU) processome, first precursor of the small eukaryotic ribosomal subunit. During the assembly of the SSU processome in the nucleolus, many ribosome biogenesis factors, an RNA chaperone and ribosomal proteins associate with the nascent pre-rRNA and work in concert to generate RNA folding, modifications, rearrangements and cleavage as well as targeted degradation of pre-ribosomal RNA by the RNA exosome.</text>
</comment>
<comment type="subunit">
    <text evidence="1">Component of the small ribosomal subunit. Part of the small subunit (SSU) processome, composed of more than 70 proteins and the RNA chaperone small nucleolar RNA (snoRNA) U3.</text>
</comment>
<comment type="subcellular location">
    <subcellularLocation>
        <location evidence="1">Cytoplasm</location>
    </subcellularLocation>
    <subcellularLocation>
        <location evidence="1">Nucleus</location>
        <location evidence="1">Nucleolus</location>
    </subcellularLocation>
</comment>
<comment type="similarity">
    <text evidence="2">Belongs to the eukaryotic ribosomal protein eS17 family.</text>
</comment>
<accession>P08636</accession>
<accession>Q804A8</accession>
<keyword id="KW-0002">3D-structure</keyword>
<keyword id="KW-0963">Cytoplasm</keyword>
<keyword id="KW-0539">Nucleus</keyword>
<keyword id="KW-1185">Reference proteome</keyword>
<keyword id="KW-0687">Ribonucleoprotein</keyword>
<keyword id="KW-0689">Ribosomal protein</keyword>
<sequence>MGRVRTKTVKKAARVIIEKYYTRLGNDFHTNKRVCEEIAIIPSKKLRNKIAGYVTHLMKRIQRGPVRGISIKLQEEERERRDNYVPEVSALDQEIIEVDPDTKEMLKLLDFGSLSNLQVTQPTVGMNFKTPRGAL</sequence>
<gene>
    <name type="primary">RPS17</name>
</gene>
<name>RS17_CHICK</name>
<organism>
    <name type="scientific">Gallus gallus</name>
    <name type="common">Chicken</name>
    <dbReference type="NCBI Taxonomy" id="9031"/>
    <lineage>
        <taxon>Eukaryota</taxon>
        <taxon>Metazoa</taxon>
        <taxon>Chordata</taxon>
        <taxon>Craniata</taxon>
        <taxon>Vertebrata</taxon>
        <taxon>Euteleostomi</taxon>
        <taxon>Archelosauria</taxon>
        <taxon>Archosauria</taxon>
        <taxon>Dinosauria</taxon>
        <taxon>Saurischia</taxon>
        <taxon>Theropoda</taxon>
        <taxon>Coelurosauria</taxon>
        <taxon>Aves</taxon>
        <taxon>Neognathae</taxon>
        <taxon>Galloanserae</taxon>
        <taxon>Galliformes</taxon>
        <taxon>Phasianidae</taxon>
        <taxon>Phasianinae</taxon>
        <taxon>Gallus</taxon>
    </lineage>
</organism>
<dbReference type="EMBL" id="AY215074">
    <property type="protein sequence ID" value="AAO26018.1"/>
    <property type="molecule type" value="mRNA"/>
</dbReference>
<dbReference type="EMBL" id="X07257">
    <property type="protein sequence ID" value="CAA30244.1"/>
    <property type="molecule type" value="mRNA"/>
</dbReference>
<dbReference type="PIR" id="S00760">
    <property type="entry name" value="S00760"/>
</dbReference>
<dbReference type="RefSeq" id="NP_989548.1">
    <property type="nucleotide sequence ID" value="NM_204217.2"/>
</dbReference>
<dbReference type="PDB" id="8Q7Z">
    <property type="method" value="EM"/>
    <property type="resolution" value="2.50 A"/>
    <property type="chains" value="Aq=1-135"/>
</dbReference>
<dbReference type="PDB" id="8Q87">
    <property type="method" value="EM"/>
    <property type="resolution" value="2.40 A"/>
    <property type="chains" value="Aq=1-135"/>
</dbReference>
<dbReference type="PDBsum" id="8Q7Z"/>
<dbReference type="PDBsum" id="8Q87"/>
<dbReference type="SMR" id="P08636"/>
<dbReference type="FunCoup" id="P08636">
    <property type="interactions" value="2205"/>
</dbReference>
<dbReference type="STRING" id="9031.ENSGALP00000045637"/>
<dbReference type="PaxDb" id="9031-ENSGALP00000003373"/>
<dbReference type="Ensembl" id="ENSGALT00010056882.1">
    <property type="protein sequence ID" value="ENSGALP00010034590.1"/>
    <property type="gene ID" value="ENSGALG00010023334.1"/>
</dbReference>
<dbReference type="GeneID" id="374053"/>
<dbReference type="KEGG" id="gga:374053"/>
<dbReference type="CTD" id="6218"/>
<dbReference type="VEuPathDB" id="HostDB:geneid_374053"/>
<dbReference type="eggNOG" id="KOG0187">
    <property type="taxonomic scope" value="Eukaryota"/>
</dbReference>
<dbReference type="GeneTree" id="ENSGT00390000006548"/>
<dbReference type="HOGENOM" id="CLU_194164_0_0_1"/>
<dbReference type="InParanoid" id="P08636"/>
<dbReference type="OMA" id="HTEHIEV"/>
<dbReference type="OrthoDB" id="1727351at2759"/>
<dbReference type="PhylomeDB" id="P08636"/>
<dbReference type="Reactome" id="R-GGA-1799339">
    <property type="pathway name" value="SRP-dependent cotranslational protein targeting to membrane"/>
</dbReference>
<dbReference type="Reactome" id="R-GGA-72649">
    <property type="pathway name" value="Translation initiation complex formation"/>
</dbReference>
<dbReference type="Reactome" id="R-GGA-72689">
    <property type="pathway name" value="Formation of a pool of free 40S subunits"/>
</dbReference>
<dbReference type="Reactome" id="R-GGA-72695">
    <property type="pathway name" value="Formation of the ternary complex, and subsequently, the 43S complex"/>
</dbReference>
<dbReference type="Reactome" id="R-GGA-72702">
    <property type="pathway name" value="Ribosomal scanning and start codon recognition"/>
</dbReference>
<dbReference type="Reactome" id="R-GGA-72706">
    <property type="pathway name" value="GTP hydrolysis and joining of the 60S ribosomal subunit"/>
</dbReference>
<dbReference type="Reactome" id="R-GGA-975956">
    <property type="pathway name" value="Nonsense Mediated Decay (NMD) independent of the Exon Junction Complex (EJC)"/>
</dbReference>
<dbReference type="Reactome" id="R-GGA-975957">
    <property type="pathway name" value="Nonsense Mediated Decay (NMD) enhanced by the Exon Junction Complex (EJC)"/>
</dbReference>
<dbReference type="PRO" id="PR:P08636"/>
<dbReference type="Proteomes" id="UP000000539">
    <property type="component" value="Chromosome 10"/>
</dbReference>
<dbReference type="Bgee" id="ENSGALG00000002157">
    <property type="expression patterns" value="Expressed in granulocyte and 12 other cell types or tissues"/>
</dbReference>
<dbReference type="GO" id="GO:0022626">
    <property type="term" value="C:cytosolic ribosome"/>
    <property type="evidence" value="ECO:0007669"/>
    <property type="project" value="UniProtKB-ARBA"/>
</dbReference>
<dbReference type="GO" id="GO:0005730">
    <property type="term" value="C:nucleolus"/>
    <property type="evidence" value="ECO:0007669"/>
    <property type="project" value="UniProtKB-SubCell"/>
</dbReference>
<dbReference type="GO" id="GO:0032040">
    <property type="term" value="C:small-subunit processome"/>
    <property type="evidence" value="ECO:0000250"/>
    <property type="project" value="UniProtKB"/>
</dbReference>
<dbReference type="GO" id="GO:0003735">
    <property type="term" value="F:structural constituent of ribosome"/>
    <property type="evidence" value="ECO:0007669"/>
    <property type="project" value="InterPro"/>
</dbReference>
<dbReference type="GO" id="GO:0042274">
    <property type="term" value="P:ribosomal small subunit biogenesis"/>
    <property type="evidence" value="ECO:0000250"/>
    <property type="project" value="UniProtKB"/>
</dbReference>
<dbReference type="GO" id="GO:0006412">
    <property type="term" value="P:translation"/>
    <property type="evidence" value="ECO:0007669"/>
    <property type="project" value="InterPro"/>
</dbReference>
<dbReference type="FunFam" id="1.10.60.20:FF:000001">
    <property type="entry name" value="40S ribosomal protein S17"/>
    <property type="match status" value="1"/>
</dbReference>
<dbReference type="Gene3D" id="1.10.60.20">
    <property type="entry name" value="Ribosomal protein S17e-like"/>
    <property type="match status" value="1"/>
</dbReference>
<dbReference type="HAMAP" id="MF_00511">
    <property type="entry name" value="Ribosomal_eS17"/>
    <property type="match status" value="1"/>
</dbReference>
<dbReference type="InterPro" id="IPR001210">
    <property type="entry name" value="Ribosomal_eS17"/>
</dbReference>
<dbReference type="InterPro" id="IPR018273">
    <property type="entry name" value="Ribosomal_eS17_CS"/>
</dbReference>
<dbReference type="InterPro" id="IPR036401">
    <property type="entry name" value="Ribosomal_eS17_sf"/>
</dbReference>
<dbReference type="NCBIfam" id="NF002242">
    <property type="entry name" value="PRK01151.1"/>
    <property type="match status" value="1"/>
</dbReference>
<dbReference type="PANTHER" id="PTHR10732">
    <property type="entry name" value="40S RIBOSOMAL PROTEIN S17"/>
    <property type="match status" value="1"/>
</dbReference>
<dbReference type="PANTHER" id="PTHR10732:SF0">
    <property type="entry name" value="40S RIBOSOMAL PROTEIN S17"/>
    <property type="match status" value="1"/>
</dbReference>
<dbReference type="Pfam" id="PF00833">
    <property type="entry name" value="Ribosomal_S17e"/>
    <property type="match status" value="1"/>
</dbReference>
<dbReference type="SUPFAM" id="SSF116820">
    <property type="entry name" value="Rps17e-like"/>
    <property type="match status" value="1"/>
</dbReference>
<dbReference type="PROSITE" id="PS00712">
    <property type="entry name" value="RIBOSOMAL_S17E"/>
    <property type="match status" value="1"/>
</dbReference>
<evidence type="ECO:0000250" key="1">
    <source>
        <dbReference type="UniProtKB" id="P08708"/>
    </source>
</evidence>
<evidence type="ECO:0000305" key="2"/>
<reference key="1">
    <citation type="submission" date="2003-01" db="EMBL/GenBank/DDBJ databases">
        <title>cDNA cloning of chicken ribosomal protein S17.</title>
        <authorList>
            <person name="Tsukada A."/>
            <person name="Yamamoto I."/>
            <person name="Saito N."/>
            <person name="Shimada K."/>
        </authorList>
    </citation>
    <scope>NUCLEOTIDE SEQUENCE [MRNA]</scope>
    <source>
        <tissue>Liver</tissue>
    </source>
</reference>
<reference key="2">
    <citation type="journal article" date="1988" name="Nucleic Acids Res.">
        <title>Sequence of a cDNA clone encoding chicken ribosomal protein S17.</title>
        <authorList>
            <person name="Trueeb B."/>
            <person name="Schreier T."/>
            <person name="Winterhalter K.H."/>
            <person name="Strehler E.E."/>
        </authorList>
    </citation>
    <scope>NUCLEOTIDE SEQUENCE [MRNA] OF 7-135</scope>
    <source>
        <tissue>Gizzard</tissue>
    </source>
</reference>
<proteinExistence type="evidence at protein level"/>
<protein>
    <recommendedName>
        <fullName evidence="2">Small ribosomal subunit protein eS17</fullName>
    </recommendedName>
    <alternativeName>
        <fullName>40S ribosomal protein S17</fullName>
    </alternativeName>
</protein>